<organism>
    <name type="scientific">Clostridium kluyveri (strain ATCC 8527 / DSM 555 / NBRC 12016 / NCIMB 10680 / K1)</name>
    <dbReference type="NCBI Taxonomy" id="431943"/>
    <lineage>
        <taxon>Bacteria</taxon>
        <taxon>Bacillati</taxon>
        <taxon>Bacillota</taxon>
        <taxon>Clostridia</taxon>
        <taxon>Eubacteriales</taxon>
        <taxon>Clostridiaceae</taxon>
        <taxon>Clostridium</taxon>
    </lineage>
</organism>
<name>CH10_CLOK5</name>
<sequence>MKIRPLGDRVVIKKIEAEETTKSGIVLPGSAKEKPQEAEIVAVGPGGVIDGKEIKMEVKVGDRVLFSKYAGNEVKIDGVEYTILRQDDILAIIE</sequence>
<evidence type="ECO:0000255" key="1">
    <source>
        <dbReference type="HAMAP-Rule" id="MF_00580"/>
    </source>
</evidence>
<accession>A5N5D6</accession>
<proteinExistence type="inferred from homology"/>
<keyword id="KW-0143">Chaperone</keyword>
<keyword id="KW-0963">Cytoplasm</keyword>
<keyword id="KW-1185">Reference proteome</keyword>
<gene>
    <name evidence="1" type="primary">groES</name>
    <name evidence="1" type="synonym">groS</name>
    <name type="ordered locus">CKL_0463</name>
</gene>
<protein>
    <recommendedName>
        <fullName evidence="1">Co-chaperonin GroES</fullName>
    </recommendedName>
    <alternativeName>
        <fullName evidence="1">10 kDa chaperonin</fullName>
    </alternativeName>
    <alternativeName>
        <fullName evidence="1">Chaperonin-10</fullName>
        <shortName evidence="1">Cpn10</shortName>
    </alternativeName>
</protein>
<dbReference type="EMBL" id="CP000673">
    <property type="protein sequence ID" value="EDK32517.1"/>
    <property type="molecule type" value="Genomic_DNA"/>
</dbReference>
<dbReference type="RefSeq" id="WP_011989032.1">
    <property type="nucleotide sequence ID" value="NC_009706.1"/>
</dbReference>
<dbReference type="SMR" id="A5N5D6"/>
<dbReference type="STRING" id="431943.CKL_0463"/>
<dbReference type="KEGG" id="ckl:CKL_0463"/>
<dbReference type="eggNOG" id="COG0234">
    <property type="taxonomic scope" value="Bacteria"/>
</dbReference>
<dbReference type="HOGENOM" id="CLU_132825_2_0_9"/>
<dbReference type="Proteomes" id="UP000002411">
    <property type="component" value="Chromosome"/>
</dbReference>
<dbReference type="GO" id="GO:0005737">
    <property type="term" value="C:cytoplasm"/>
    <property type="evidence" value="ECO:0007669"/>
    <property type="project" value="UniProtKB-SubCell"/>
</dbReference>
<dbReference type="GO" id="GO:0005524">
    <property type="term" value="F:ATP binding"/>
    <property type="evidence" value="ECO:0007669"/>
    <property type="project" value="InterPro"/>
</dbReference>
<dbReference type="GO" id="GO:0046872">
    <property type="term" value="F:metal ion binding"/>
    <property type="evidence" value="ECO:0007669"/>
    <property type="project" value="TreeGrafter"/>
</dbReference>
<dbReference type="GO" id="GO:0044183">
    <property type="term" value="F:protein folding chaperone"/>
    <property type="evidence" value="ECO:0007669"/>
    <property type="project" value="InterPro"/>
</dbReference>
<dbReference type="GO" id="GO:0051087">
    <property type="term" value="F:protein-folding chaperone binding"/>
    <property type="evidence" value="ECO:0007669"/>
    <property type="project" value="TreeGrafter"/>
</dbReference>
<dbReference type="GO" id="GO:0051082">
    <property type="term" value="F:unfolded protein binding"/>
    <property type="evidence" value="ECO:0007669"/>
    <property type="project" value="TreeGrafter"/>
</dbReference>
<dbReference type="GO" id="GO:0051085">
    <property type="term" value="P:chaperone cofactor-dependent protein refolding"/>
    <property type="evidence" value="ECO:0007669"/>
    <property type="project" value="TreeGrafter"/>
</dbReference>
<dbReference type="CDD" id="cd00320">
    <property type="entry name" value="cpn10"/>
    <property type="match status" value="1"/>
</dbReference>
<dbReference type="FunFam" id="2.30.33.40:FF:000001">
    <property type="entry name" value="10 kDa chaperonin"/>
    <property type="match status" value="1"/>
</dbReference>
<dbReference type="Gene3D" id="2.30.33.40">
    <property type="entry name" value="GroES chaperonin"/>
    <property type="match status" value="1"/>
</dbReference>
<dbReference type="HAMAP" id="MF_00580">
    <property type="entry name" value="CH10"/>
    <property type="match status" value="1"/>
</dbReference>
<dbReference type="InterPro" id="IPR020818">
    <property type="entry name" value="Chaperonin_GroES"/>
</dbReference>
<dbReference type="InterPro" id="IPR037124">
    <property type="entry name" value="Chaperonin_GroES_sf"/>
</dbReference>
<dbReference type="InterPro" id="IPR018369">
    <property type="entry name" value="Chaprnonin_Cpn10_CS"/>
</dbReference>
<dbReference type="InterPro" id="IPR011032">
    <property type="entry name" value="GroES-like_sf"/>
</dbReference>
<dbReference type="NCBIfam" id="NF001527">
    <property type="entry name" value="PRK00364.1-2"/>
    <property type="match status" value="1"/>
</dbReference>
<dbReference type="NCBIfam" id="NF001531">
    <property type="entry name" value="PRK00364.2-2"/>
    <property type="match status" value="1"/>
</dbReference>
<dbReference type="NCBIfam" id="NF001533">
    <property type="entry name" value="PRK00364.2-4"/>
    <property type="match status" value="1"/>
</dbReference>
<dbReference type="NCBIfam" id="NF001534">
    <property type="entry name" value="PRK00364.2-5"/>
    <property type="match status" value="1"/>
</dbReference>
<dbReference type="PANTHER" id="PTHR10772">
    <property type="entry name" value="10 KDA HEAT SHOCK PROTEIN"/>
    <property type="match status" value="1"/>
</dbReference>
<dbReference type="PANTHER" id="PTHR10772:SF58">
    <property type="entry name" value="CO-CHAPERONIN GROES"/>
    <property type="match status" value="1"/>
</dbReference>
<dbReference type="Pfam" id="PF00166">
    <property type="entry name" value="Cpn10"/>
    <property type="match status" value="1"/>
</dbReference>
<dbReference type="PRINTS" id="PR00297">
    <property type="entry name" value="CHAPERONIN10"/>
</dbReference>
<dbReference type="SMART" id="SM00883">
    <property type="entry name" value="Cpn10"/>
    <property type="match status" value="1"/>
</dbReference>
<dbReference type="SUPFAM" id="SSF50129">
    <property type="entry name" value="GroES-like"/>
    <property type="match status" value="1"/>
</dbReference>
<dbReference type="PROSITE" id="PS00681">
    <property type="entry name" value="CHAPERONINS_CPN10"/>
    <property type="match status" value="1"/>
</dbReference>
<feature type="chain" id="PRO_1000082370" description="Co-chaperonin GroES">
    <location>
        <begin position="1"/>
        <end position="94"/>
    </location>
</feature>
<reference key="1">
    <citation type="journal article" date="2008" name="Proc. Natl. Acad. Sci. U.S.A.">
        <title>The genome of Clostridium kluyveri, a strict anaerobe with unique metabolic features.</title>
        <authorList>
            <person name="Seedorf H."/>
            <person name="Fricke W.F."/>
            <person name="Veith B."/>
            <person name="Brueggemann H."/>
            <person name="Liesegang H."/>
            <person name="Strittmatter A."/>
            <person name="Miethke M."/>
            <person name="Buckel W."/>
            <person name="Hinderberger J."/>
            <person name="Li F."/>
            <person name="Hagemeier C."/>
            <person name="Thauer R.K."/>
            <person name="Gottschalk G."/>
        </authorList>
    </citation>
    <scope>NUCLEOTIDE SEQUENCE [LARGE SCALE GENOMIC DNA]</scope>
    <source>
        <strain>ATCC 8527 / DSM 555 / NBRC 12016 / NCIMB 10680 / K1</strain>
    </source>
</reference>
<comment type="function">
    <text evidence="1">Together with the chaperonin GroEL, plays an essential role in assisting protein folding. The GroEL-GroES system forms a nano-cage that allows encapsulation of the non-native substrate proteins and provides a physical environment optimized to promote and accelerate protein folding. GroES binds to the apical surface of the GroEL ring, thereby capping the opening of the GroEL channel.</text>
</comment>
<comment type="subunit">
    <text evidence="1">Heptamer of 7 subunits arranged in a ring. Interacts with the chaperonin GroEL.</text>
</comment>
<comment type="subcellular location">
    <subcellularLocation>
        <location evidence="1">Cytoplasm</location>
    </subcellularLocation>
</comment>
<comment type="similarity">
    <text evidence="1">Belongs to the GroES chaperonin family.</text>
</comment>